<protein>
    <recommendedName>
        <fullName>Feruloyl-CoA thioesterase</fullName>
        <ecNumber>3.1.2.-</ecNumber>
    </recommendedName>
</protein>
<proteinExistence type="evidence at protein level"/>
<evidence type="ECO:0000269" key="1">
    <source ref="1"/>
</evidence>
<evidence type="ECO:0000305" key="2"/>
<accession>P82150</accession>
<reference key="1">
    <citation type="submission" date="1999-11" db="UniProtKB">
        <authorList>
            <person name="Maury S."/>
            <person name="Geoffroy P."/>
            <person name="Legrand M."/>
        </authorList>
    </citation>
    <scope>PROTEIN SEQUENCE</scope>
    <scope>TISSUE SPECIFICITY</scope>
    <scope>INDUCTION</scope>
    <source>
        <strain evidence="2">cv. Samsun NN</strain>
        <tissue evidence="2">Stem</tissue>
    </source>
</reference>
<comment type="pathway">
    <text>Aromatic compound metabolism; phenylpropanoid biosynthesis.</text>
</comment>
<comment type="tissue specificity">
    <text evidence="1 2">Expressed in stem, vascular tissues and tobacco mosaic virus infected leaves.</text>
</comment>
<comment type="induction">
    <text evidence="1 2">By pathogen infection.</text>
</comment>
<keyword id="KW-0903">Direct protein sequencing</keyword>
<keyword id="KW-0378">Hydrolase</keyword>
<keyword id="KW-1185">Reference proteome</keyword>
<dbReference type="EC" id="3.1.2.-"/>
<dbReference type="PaxDb" id="4097-P82150"/>
<dbReference type="UniPathway" id="UPA00711"/>
<dbReference type="Proteomes" id="UP000084051">
    <property type="component" value="Unplaced"/>
</dbReference>
<dbReference type="GO" id="GO:0016787">
    <property type="term" value="F:hydrolase activity"/>
    <property type="evidence" value="ECO:0007669"/>
    <property type="project" value="UniProtKB-KW"/>
</dbReference>
<dbReference type="GO" id="GO:0009699">
    <property type="term" value="P:phenylpropanoid biosynthetic process"/>
    <property type="evidence" value="ECO:0007669"/>
    <property type="project" value="UniProtKB-UniPathway"/>
</dbReference>
<sequence>PFNVGGLDKFGTLN</sequence>
<organism>
    <name type="scientific">Nicotiana tabacum</name>
    <name type="common">Common tobacco</name>
    <dbReference type="NCBI Taxonomy" id="4097"/>
    <lineage>
        <taxon>Eukaryota</taxon>
        <taxon>Viridiplantae</taxon>
        <taxon>Streptophyta</taxon>
        <taxon>Embryophyta</taxon>
        <taxon>Tracheophyta</taxon>
        <taxon>Spermatophyta</taxon>
        <taxon>Magnoliopsida</taxon>
        <taxon>eudicotyledons</taxon>
        <taxon>Gunneridae</taxon>
        <taxon>Pentapetalae</taxon>
        <taxon>asterids</taxon>
        <taxon>lamiids</taxon>
        <taxon>Solanales</taxon>
        <taxon>Solanaceae</taxon>
        <taxon>Nicotianoideae</taxon>
        <taxon>Nicotianeae</taxon>
        <taxon>Nicotiana</taxon>
    </lineage>
</organism>
<feature type="chain" id="PRO_0000087229" description="Feruloyl-CoA thioesterase">
    <location>
        <begin position="1"/>
        <end position="14" status="greater than"/>
    </location>
</feature>
<feature type="non-terminal residue" evidence="2">
    <location>
        <position position="14"/>
    </location>
</feature>
<name>FERT_TOBAC</name>